<feature type="transit peptide" description="Mitochondrion" evidence="3">
    <location>
        <begin position="1"/>
        <end status="unknown"/>
    </location>
</feature>
<feature type="propeptide" id="PRO_0000382185" evidence="3">
    <location>
        <begin status="unknown"/>
        <end position="78"/>
    </location>
</feature>
<feature type="chain" id="PRO_0000382186" description="Serine protease HTRA2, mitochondrial" evidence="2">
    <location>
        <begin position="79"/>
        <end position="426"/>
    </location>
</feature>
<feature type="transmembrane region" description="Helical" evidence="3">
    <location>
        <begin position="71"/>
        <end position="87"/>
    </location>
</feature>
<feature type="domain" description="PDZ" evidence="4">
    <location>
        <begin position="329"/>
        <end position="414"/>
    </location>
</feature>
<feature type="region of interest" description="Disordered" evidence="5">
    <location>
        <begin position="31"/>
        <end position="59"/>
    </location>
</feature>
<feature type="region of interest" description="Serine protease" evidence="3">
    <location>
        <begin position="143"/>
        <end position="306"/>
    </location>
</feature>
<feature type="short sequence motif" description="IAP-binding" evidence="3">
    <location>
        <begin position="79"/>
        <end position="82"/>
    </location>
</feature>
<feature type="compositionally biased region" description="Low complexity" evidence="5">
    <location>
        <begin position="31"/>
        <end position="58"/>
    </location>
</feature>
<feature type="active site" description="Charge relay system" evidence="1">
    <location>
        <position position="161"/>
    </location>
</feature>
<feature type="active site" description="Charge relay system" evidence="1">
    <location>
        <position position="193"/>
    </location>
</feature>
<feature type="active site" description="Charge relay system" evidence="2">
    <location>
        <position position="270"/>
    </location>
</feature>
<protein>
    <recommendedName>
        <fullName evidence="2">Serine protease HTRA2, mitochondrial</fullName>
        <ecNumber>3.4.21.108</ecNumber>
    </recommendedName>
    <alternativeName>
        <fullName evidence="2">High temperature requirement protein A2</fullName>
    </alternativeName>
</protein>
<gene>
    <name evidence="2" type="primary">HtrA2</name>
    <name type="ORF">GH13631</name>
</gene>
<evidence type="ECO:0000250" key="1">
    <source>
        <dbReference type="UniProtKB" id="O43464"/>
    </source>
</evidence>
<evidence type="ECO:0000250" key="2">
    <source>
        <dbReference type="UniProtKB" id="Q9VFJ3"/>
    </source>
</evidence>
<evidence type="ECO:0000255" key="3"/>
<evidence type="ECO:0000255" key="4">
    <source>
        <dbReference type="PROSITE-ProRule" id="PRU00143"/>
    </source>
</evidence>
<evidence type="ECO:0000256" key="5">
    <source>
        <dbReference type="SAM" id="MobiDB-lite"/>
    </source>
</evidence>
<evidence type="ECO:0000312" key="6">
    <source>
        <dbReference type="EMBL" id="EDV91516.1"/>
    </source>
</evidence>
<keyword id="KW-0053">Apoptosis</keyword>
<keyword id="KW-0378">Hydrolase</keyword>
<keyword id="KW-0472">Membrane</keyword>
<keyword id="KW-0496">Mitochondrion</keyword>
<keyword id="KW-0645">Protease</keyword>
<keyword id="KW-1185">Reference proteome</keyword>
<keyword id="KW-0720">Serine protease</keyword>
<keyword id="KW-0809">Transit peptide</keyword>
<keyword id="KW-0812">Transmembrane</keyword>
<keyword id="KW-1133">Transmembrane helix</keyword>
<keyword id="KW-0865">Zymogen</keyword>
<dbReference type="EC" id="3.4.21.108"/>
<dbReference type="EMBL" id="CH916374">
    <property type="protein sequence ID" value="EDV91516.1"/>
    <property type="molecule type" value="Genomic_DNA"/>
</dbReference>
<dbReference type="SMR" id="B4JTT7"/>
<dbReference type="FunCoup" id="B4JTT7">
    <property type="interactions" value="1142"/>
</dbReference>
<dbReference type="STRING" id="7222.B4JTT7"/>
<dbReference type="EnsemblMetazoa" id="FBtr0149045">
    <property type="protein sequence ID" value="FBpp0147537"/>
    <property type="gene ID" value="FBgn0121107"/>
</dbReference>
<dbReference type="EnsemblMetazoa" id="XM_001994851.3">
    <property type="protein sequence ID" value="XP_001994887.1"/>
    <property type="gene ID" value="LOC6568330"/>
</dbReference>
<dbReference type="GeneID" id="6568330"/>
<dbReference type="KEGG" id="dgr:6568330"/>
<dbReference type="CTD" id="27429"/>
<dbReference type="eggNOG" id="KOG1320">
    <property type="taxonomic scope" value="Eukaryota"/>
</dbReference>
<dbReference type="HOGENOM" id="CLU_020120_6_0_1"/>
<dbReference type="InParanoid" id="B4JTT7"/>
<dbReference type="OMA" id="IMSPEGY"/>
<dbReference type="OrthoDB" id="4217619at2759"/>
<dbReference type="PhylomeDB" id="B4JTT7"/>
<dbReference type="Proteomes" id="UP000001070">
    <property type="component" value="Unassembled WGS sequence"/>
</dbReference>
<dbReference type="GO" id="GO:0005758">
    <property type="term" value="C:mitochondrial intermembrane space"/>
    <property type="evidence" value="ECO:0007669"/>
    <property type="project" value="UniProtKB-SubCell"/>
</dbReference>
<dbReference type="GO" id="GO:0031966">
    <property type="term" value="C:mitochondrial membrane"/>
    <property type="evidence" value="ECO:0007669"/>
    <property type="project" value="UniProtKB-SubCell"/>
</dbReference>
<dbReference type="GO" id="GO:0004252">
    <property type="term" value="F:serine-type endopeptidase activity"/>
    <property type="evidence" value="ECO:0007669"/>
    <property type="project" value="InterPro"/>
</dbReference>
<dbReference type="GO" id="GO:0006915">
    <property type="term" value="P:apoptotic process"/>
    <property type="evidence" value="ECO:0007669"/>
    <property type="project" value="UniProtKB-KW"/>
</dbReference>
<dbReference type="GO" id="GO:0043065">
    <property type="term" value="P:positive regulation of apoptotic process"/>
    <property type="evidence" value="ECO:0007669"/>
    <property type="project" value="TreeGrafter"/>
</dbReference>
<dbReference type="GO" id="GO:0006508">
    <property type="term" value="P:proteolysis"/>
    <property type="evidence" value="ECO:0007669"/>
    <property type="project" value="UniProtKB-KW"/>
</dbReference>
<dbReference type="CDD" id="cd06785">
    <property type="entry name" value="cpPDZ_HtrA-like"/>
    <property type="match status" value="1"/>
</dbReference>
<dbReference type="FunFam" id="2.40.10.120:FF:000004">
    <property type="entry name" value="Serine protease HTRA2, mitochondrial"/>
    <property type="match status" value="1"/>
</dbReference>
<dbReference type="Gene3D" id="2.30.42.10">
    <property type="match status" value="1"/>
</dbReference>
<dbReference type="Gene3D" id="2.40.10.120">
    <property type="match status" value="1"/>
</dbReference>
<dbReference type="InterPro" id="IPR001478">
    <property type="entry name" value="PDZ"/>
</dbReference>
<dbReference type="InterPro" id="IPR041489">
    <property type="entry name" value="PDZ_6"/>
</dbReference>
<dbReference type="InterPro" id="IPR036034">
    <property type="entry name" value="PDZ_sf"/>
</dbReference>
<dbReference type="InterPro" id="IPR009003">
    <property type="entry name" value="Peptidase_S1_PA"/>
</dbReference>
<dbReference type="InterPro" id="IPR001940">
    <property type="entry name" value="Peptidase_S1C"/>
</dbReference>
<dbReference type="PANTHER" id="PTHR22939">
    <property type="entry name" value="SERINE PROTEASE FAMILY S1C HTRA-RELATED"/>
    <property type="match status" value="1"/>
</dbReference>
<dbReference type="PANTHER" id="PTHR22939:SF129">
    <property type="entry name" value="SERINE PROTEASE HTRA2, MITOCHONDRIAL"/>
    <property type="match status" value="1"/>
</dbReference>
<dbReference type="Pfam" id="PF17820">
    <property type="entry name" value="PDZ_6"/>
    <property type="match status" value="1"/>
</dbReference>
<dbReference type="Pfam" id="PF13365">
    <property type="entry name" value="Trypsin_2"/>
    <property type="match status" value="1"/>
</dbReference>
<dbReference type="PRINTS" id="PR00834">
    <property type="entry name" value="PROTEASES2C"/>
</dbReference>
<dbReference type="SMART" id="SM00228">
    <property type="entry name" value="PDZ"/>
    <property type="match status" value="1"/>
</dbReference>
<dbReference type="SUPFAM" id="SSF50156">
    <property type="entry name" value="PDZ domain-like"/>
    <property type="match status" value="1"/>
</dbReference>
<dbReference type="SUPFAM" id="SSF50494">
    <property type="entry name" value="Trypsin-like serine proteases"/>
    <property type="match status" value="1"/>
</dbReference>
<dbReference type="PROSITE" id="PS50106">
    <property type="entry name" value="PDZ"/>
    <property type="match status" value="1"/>
</dbReference>
<organism>
    <name type="scientific">Drosophila grimshawi</name>
    <name type="common">Hawaiian fruit fly</name>
    <name type="synonym">Idiomyia grimshawi</name>
    <dbReference type="NCBI Taxonomy" id="7222"/>
    <lineage>
        <taxon>Eukaryota</taxon>
        <taxon>Metazoa</taxon>
        <taxon>Ecdysozoa</taxon>
        <taxon>Arthropoda</taxon>
        <taxon>Hexapoda</taxon>
        <taxon>Insecta</taxon>
        <taxon>Pterygota</taxon>
        <taxon>Neoptera</taxon>
        <taxon>Endopterygota</taxon>
        <taxon>Diptera</taxon>
        <taxon>Brachycera</taxon>
        <taxon>Muscomorpha</taxon>
        <taxon>Ephydroidea</taxon>
        <taxon>Drosophilidae</taxon>
        <taxon>Drosophila</taxon>
        <taxon>Hawaiian Drosophila</taxon>
    </lineage>
</organism>
<reference evidence="6" key="1">
    <citation type="journal article" date="2007" name="Nature">
        <title>Evolution of genes and genomes on the Drosophila phylogeny.</title>
        <authorList>
            <consortium name="Drosophila 12 genomes consortium"/>
        </authorList>
    </citation>
    <scope>NUCLEOTIDE SEQUENCE [LARGE SCALE GENOMIC DNA]</scope>
    <source>
        <strain evidence="6">Tucson 15287-2541.00</strain>
    </source>
</reference>
<comment type="function">
    <text evidence="2">Serine protease that shows proteolytic activity against a non-specific substrate beta-casein. Promotes or induces cell death either by direct binding to and inhibition of BIRC proteins (also called inhibitor of apoptosis proteins, IAPs), leading to an increase in caspase activity, or by a BIRC inhibition-independent, caspase-independent and serine protease activity-dependent mechanism. Can antagonize antiapoptotic activity of th/Diap1 by directly inducing the degradation of th/Diap1 (By similarity).</text>
</comment>
<comment type="catalytic activity">
    <reaction>
        <text>Cleavage of non-polar aliphatic amino-acids at the P1 position, with a preference for Val, Ile and Met. At the P2 and P3 positions, Arg is selected most strongly with a secondary preference for other hydrophilic residues.</text>
        <dbReference type="EC" id="3.4.21.108"/>
    </reaction>
</comment>
<comment type="subunit">
    <text evidence="2">Interacts with th/DIAP1 (via BIR 2 domain).</text>
</comment>
<comment type="subcellular location">
    <subcellularLocation>
        <location evidence="2">Mitochondrion intermembrane space</location>
        <topology evidence="3">Single-pass membrane protein</topology>
    </subcellularLocation>
    <subcellularLocation>
        <location evidence="2">Mitochondrion membrane</location>
        <topology evidence="3">Single-pass membrane protein</topology>
    </subcellularLocation>
    <text evidence="2">Predominantly present in the intermembrane space. Released into the cytosol following apoptotic stimuli, such as UV treatment. The extramitochondrial protein does not diffuse throughout the cytosol but stays near the mitochondria.</text>
</comment>
<comment type="similarity">
    <text evidence="3">Belongs to the peptidase S1C family.</text>
</comment>
<sequence>MALRSITKLETFLKRYSAPTLYYCLHRSTQSSTCNSTNTDNGSHNTNYNSSNNNNNNNDNKRFSWRSAIRFLVPFSLGALASSVVAGDRELMPTISAKTLTNNRRDFNFIADVVASCADSVVYIEIKDTRHFDYFSGQPITASNGSGFVIEQNGLILTNAHVVINKPNTMVQVRLSDGRTFPATIEDVDQTSDLATLRIQVTNLSVMKLGKSSTLRSGEWVVALGSPLALSNTVTAGVISSTQRASQELGLRNRDINYLQTDAAITFGNSGGPLVNLDGEAIGVNSMKVTAGISFAIPIDYVKLFLERAAARRKKGSAYKTGYPVKRYMGITMLTLTPDILFELKSRTQNMPETLSHGVLVWKVIVGSPAHSGGLQPGDIVTHINKKEIKNSSDVYDALADGKKDLDMVILRGVKQMRVTITPEDP</sequence>
<accession>B4JTT7</accession>
<proteinExistence type="inferred from homology"/>
<name>HTRA2_DROGR</name>